<feature type="chain" id="PRO_0000291527" description="Trimeric intracellular cation channel type B">
    <location>
        <begin position="1"/>
        <end position="289"/>
    </location>
</feature>
<feature type="topological domain" description="Lumenal" evidence="6">
    <location>
        <begin position="1"/>
        <end position="18"/>
    </location>
</feature>
<feature type="transmembrane region" description="Helical;Name=1" evidence="4">
    <location>
        <begin position="19"/>
        <end position="36"/>
    </location>
</feature>
<feature type="topological domain" description="Cytoplasmic" evidence="6">
    <location>
        <begin position="37"/>
        <end position="49"/>
    </location>
</feature>
<feature type="transmembrane region" description="Helical;Name=2" evidence="4">
    <location>
        <begin position="50"/>
        <end position="73"/>
    </location>
</feature>
<feature type="topological domain" description="Lumenal" evidence="6">
    <location>
        <begin position="74"/>
        <end position="85"/>
    </location>
</feature>
<feature type="transmembrane region" description="Helical;Name=3" evidence="4">
    <location>
        <begin position="86"/>
        <end position="103"/>
    </location>
</feature>
<feature type="topological domain" description="Cytoplasmic" evidence="6">
    <location>
        <begin position="104"/>
        <end position="107"/>
    </location>
</feature>
<feature type="transmembrane region" description="Helical;Name=4" evidence="4">
    <location>
        <begin position="108"/>
        <end position="125"/>
    </location>
</feature>
<feature type="topological domain" description="Lumenal" evidence="6">
    <location>
        <begin position="126"/>
        <end position="144"/>
    </location>
</feature>
<feature type="transmembrane region" description="Helical;Name=5" evidence="4">
    <location>
        <begin position="145"/>
        <end position="162"/>
    </location>
</feature>
<feature type="topological domain" description="Cytoplasmic" evidence="6">
    <location>
        <begin position="163"/>
        <end position="183"/>
    </location>
</feature>
<feature type="transmembrane region" description="Helical;Name=6" evidence="4">
    <location>
        <begin position="184"/>
        <end position="201"/>
    </location>
</feature>
<feature type="topological domain" description="Lumenal" evidence="6">
    <location>
        <begin position="202"/>
        <end position="210"/>
    </location>
</feature>
<feature type="transmembrane region" description="Helical;Name=7" evidence="4">
    <location>
        <begin position="211"/>
        <end position="230"/>
    </location>
</feature>
<feature type="topological domain" description="Cytoplasmic" evidence="6">
    <location>
        <begin position="231"/>
        <end position="289"/>
    </location>
</feature>
<feature type="region of interest" description="Disordered" evidence="5">
    <location>
        <begin position="260"/>
        <end position="289"/>
    </location>
</feature>
<feature type="compositionally biased region" description="Basic and acidic residues" evidence="5">
    <location>
        <begin position="278"/>
        <end position="289"/>
    </location>
</feature>
<feature type="binding site" evidence="3">
    <location>
        <position position="122"/>
    </location>
    <ligand>
        <name>a 1,2-diacyl-sn-glycero-3-phospho-(1D-myo-inositol-4,5-bisphosphate)</name>
        <dbReference type="ChEBI" id="CHEBI:58456"/>
    </ligand>
</feature>
<feature type="binding site" evidence="3">
    <location>
        <position position="126"/>
    </location>
    <ligand>
        <name>a 1,2-diacyl-sn-glycero-3-phospho-(1D-myo-inositol-4,5-bisphosphate)</name>
        <dbReference type="ChEBI" id="CHEBI:58456"/>
    </ligand>
</feature>
<proteinExistence type="evidence at transcript level"/>
<protein>
    <recommendedName>
        <fullName>Trimeric intracellular cation channel type B</fullName>
        <shortName>TRIC-B</shortName>
        <shortName>TRICB</shortName>
    </recommendedName>
    <alternativeName>
        <fullName>Transmembrane protein 38B</fullName>
    </alternativeName>
</protein>
<keyword id="KW-0256">Endoplasmic reticulum</keyword>
<keyword id="KW-0407">Ion channel</keyword>
<keyword id="KW-0406">Ion transport</keyword>
<keyword id="KW-0472">Membrane</keyword>
<keyword id="KW-0630">Potassium</keyword>
<keyword id="KW-0631">Potassium channel</keyword>
<keyword id="KW-0633">Potassium transport</keyword>
<keyword id="KW-1185">Reference proteome</keyword>
<keyword id="KW-0812">Transmembrane</keyword>
<keyword id="KW-1133">Transmembrane helix</keyword>
<keyword id="KW-0813">Transport</keyword>
<reference key="1">
    <citation type="submission" date="2003-01" db="EMBL/GenBank/DDBJ databases">
        <authorList>
            <consortium name="NIH - Zebrafish Gene Collection (ZGC) project"/>
        </authorList>
    </citation>
    <scope>NUCLEOTIDE SEQUENCE [LARGE SCALE MRNA]</scope>
    <source>
        <strain>AB</strain>
    </source>
</reference>
<gene>
    <name type="primary">tmem38b</name>
    <name type="ORF">zgc:55815</name>
</gene>
<sequence length="289" mass="32029">MDVFAFFNLNELAFGLSKLPMFPYFDMAHYIISVMSLREQPGALCVSQRSPLACWFSSMLYCFGGAVLSALMLADAPVAPLSNTTNLLLATLMWYLVFYCPLDVVYSLASLLPLRLVLTAMKEVTRTWKVLSGVSQAGSKYSDALFVMVAVGWAKGAGGGLISNFEQLVRGVWKPETNELLKMSYPTKVTLLGAVVFSLQQCRYLPIQTHHLTFIYTLFTVTNKTRMMLLGSSSHPLSSLESFLYKTLFVRPLTDLSAEHTHSKHNGSVPEPTTAQTHTKEAEASKKTN</sequence>
<comment type="function">
    <text evidence="1">Intracellular monovalent cation channel required for maintenance of rapid intracellular calcium release. Acts as a potassium counter-ion channel that functions in synchronization with calcium release from intracellular stores. Activated by increased cytosolic Ca(2+) levels.</text>
</comment>
<comment type="catalytic activity">
    <reaction evidence="1">
        <text>K(+)(in) = K(+)(out)</text>
        <dbReference type="Rhea" id="RHEA:29463"/>
        <dbReference type="ChEBI" id="CHEBI:29103"/>
    </reaction>
</comment>
<comment type="activity regulation">
    <text evidence="1">Channel activity is activated by increased cytosolic Ca(2+) levels and blocked by luminal high Ca(2+) levels.</text>
</comment>
<comment type="subunit">
    <text evidence="1">Homotrimer; conformation seems to be controled by binding to diacylglycerol (DAG).</text>
</comment>
<comment type="subcellular location">
    <subcellularLocation>
        <location evidence="2">Endoplasmic reticulum membrane</location>
        <topology evidence="2">Multi-pass membrane protein</topology>
    </subcellularLocation>
</comment>
<comment type="similarity">
    <text evidence="6">Belongs to the TMEM38 family.</text>
</comment>
<dbReference type="EMBL" id="BC045460">
    <property type="protein sequence ID" value="AAH45460.1"/>
    <property type="molecule type" value="mRNA"/>
</dbReference>
<dbReference type="RefSeq" id="NP_956470.1">
    <property type="nucleotide sequence ID" value="NM_200176.1"/>
</dbReference>
<dbReference type="SMR" id="Q7ZVP8"/>
<dbReference type="FunCoup" id="Q7ZVP8">
    <property type="interactions" value="848"/>
</dbReference>
<dbReference type="STRING" id="7955.ENSDARP00000134715"/>
<dbReference type="GeneID" id="393145"/>
<dbReference type="KEGG" id="dre:393145"/>
<dbReference type="AGR" id="ZFIN:ZDB-GENE-040426-807"/>
<dbReference type="CTD" id="55151"/>
<dbReference type="ZFIN" id="ZDB-GENE-040426-807">
    <property type="gene designation" value="tmem38b"/>
</dbReference>
<dbReference type="InParanoid" id="Q7ZVP8"/>
<dbReference type="OrthoDB" id="195817at2759"/>
<dbReference type="PhylomeDB" id="Q7ZVP8"/>
<dbReference type="PRO" id="PR:Q7ZVP8"/>
<dbReference type="Proteomes" id="UP000000437">
    <property type="component" value="Chromosome 21"/>
</dbReference>
<dbReference type="GO" id="GO:0005783">
    <property type="term" value="C:endoplasmic reticulum"/>
    <property type="evidence" value="ECO:0000250"/>
    <property type="project" value="UniProtKB"/>
</dbReference>
<dbReference type="GO" id="GO:0005789">
    <property type="term" value="C:endoplasmic reticulum membrane"/>
    <property type="evidence" value="ECO:0007669"/>
    <property type="project" value="UniProtKB-SubCell"/>
</dbReference>
<dbReference type="GO" id="GO:0042802">
    <property type="term" value="F:identical protein binding"/>
    <property type="evidence" value="ECO:0007669"/>
    <property type="project" value="InterPro"/>
</dbReference>
<dbReference type="GO" id="GO:0005267">
    <property type="term" value="F:potassium channel activity"/>
    <property type="evidence" value="ECO:0000250"/>
    <property type="project" value="UniProtKB"/>
</dbReference>
<dbReference type="GO" id="GO:0031101">
    <property type="term" value="P:fin regeneration"/>
    <property type="evidence" value="ECO:0000315"/>
    <property type="project" value="ZFIN"/>
</dbReference>
<dbReference type="GO" id="GO:1903010">
    <property type="term" value="P:regulation of bone development"/>
    <property type="evidence" value="ECO:0000315"/>
    <property type="project" value="ZFIN"/>
</dbReference>
<dbReference type="GO" id="GO:0030500">
    <property type="term" value="P:regulation of bone mineralization"/>
    <property type="evidence" value="ECO:0000315"/>
    <property type="project" value="ZFIN"/>
</dbReference>
<dbReference type="GO" id="GO:0051279">
    <property type="term" value="P:regulation of release of sequestered calcium ion into cytosol"/>
    <property type="evidence" value="ECO:0000250"/>
    <property type="project" value="UniProtKB"/>
</dbReference>
<dbReference type="InterPro" id="IPR007866">
    <property type="entry name" value="TRIC_channel"/>
</dbReference>
<dbReference type="PANTHER" id="PTHR12454">
    <property type="entry name" value="TRIMERIC INTRACELLULAR CATION CHANNEL"/>
    <property type="match status" value="1"/>
</dbReference>
<dbReference type="PANTHER" id="PTHR12454:SF5">
    <property type="entry name" value="TRIMERIC INTRACELLULAR CATION CHANNEL TYPE B"/>
    <property type="match status" value="1"/>
</dbReference>
<dbReference type="Pfam" id="PF05197">
    <property type="entry name" value="TRIC"/>
    <property type="match status" value="1"/>
</dbReference>
<evidence type="ECO:0000250" key="1">
    <source>
        <dbReference type="UniProtKB" id="Q6GN30"/>
    </source>
</evidence>
<evidence type="ECO:0000250" key="2">
    <source>
        <dbReference type="UniProtKB" id="Q9DAV9"/>
    </source>
</evidence>
<evidence type="ECO:0000250" key="3">
    <source>
        <dbReference type="UniProtKB" id="Q9NA73"/>
    </source>
</evidence>
<evidence type="ECO:0000255" key="4"/>
<evidence type="ECO:0000256" key="5">
    <source>
        <dbReference type="SAM" id="MobiDB-lite"/>
    </source>
</evidence>
<evidence type="ECO:0000305" key="6"/>
<accession>Q7ZVP8</accession>
<organism>
    <name type="scientific">Danio rerio</name>
    <name type="common">Zebrafish</name>
    <name type="synonym">Brachydanio rerio</name>
    <dbReference type="NCBI Taxonomy" id="7955"/>
    <lineage>
        <taxon>Eukaryota</taxon>
        <taxon>Metazoa</taxon>
        <taxon>Chordata</taxon>
        <taxon>Craniata</taxon>
        <taxon>Vertebrata</taxon>
        <taxon>Euteleostomi</taxon>
        <taxon>Actinopterygii</taxon>
        <taxon>Neopterygii</taxon>
        <taxon>Teleostei</taxon>
        <taxon>Ostariophysi</taxon>
        <taxon>Cypriniformes</taxon>
        <taxon>Danionidae</taxon>
        <taxon>Danioninae</taxon>
        <taxon>Danio</taxon>
    </lineage>
</organism>
<name>TM38B_DANRE</name>